<protein>
    <recommendedName>
        <fullName>GTPase HRas</fullName>
        <ecNumber evidence="1">3.6.5.2</ecNumber>
    </recommendedName>
    <alternativeName>
        <fullName>Transforming protein p21/H-Ras</fullName>
    </alternativeName>
</protein>
<gene>
    <name type="primary">H-RAS</name>
</gene>
<proteinExistence type="inferred from homology"/>
<name>RASH_MSVMO</name>
<evidence type="ECO:0000250" key="1">
    <source>
        <dbReference type="UniProtKB" id="P01112"/>
    </source>
</evidence>
<evidence type="ECO:0000255" key="2"/>
<evidence type="ECO:0000305" key="3"/>
<feature type="chain" id="PRO_0000030179" description="GTPase HRas">
    <location>
        <begin position="1"/>
        <end position="186"/>
    </location>
</feature>
<feature type="propeptide" id="PRO_0000030180" description="Removed in mature form" evidence="3">
    <location>
        <begin position="187"/>
        <end position="189"/>
    </location>
</feature>
<feature type="short sequence motif" description="Effector region">
    <location>
        <begin position="32"/>
        <end position="40"/>
    </location>
</feature>
<feature type="binding site">
    <location>
        <begin position="10"/>
        <end position="17"/>
    </location>
    <ligand>
        <name>GTP</name>
        <dbReference type="ChEBI" id="CHEBI:37565"/>
    </ligand>
</feature>
<feature type="binding site">
    <location>
        <begin position="57"/>
        <end position="61"/>
    </location>
    <ligand>
        <name>GTP</name>
        <dbReference type="ChEBI" id="CHEBI:37565"/>
    </ligand>
</feature>
<feature type="binding site">
    <location>
        <begin position="116"/>
        <end position="119"/>
    </location>
    <ligand>
        <name>GTP</name>
        <dbReference type="ChEBI" id="CHEBI:37565"/>
    </ligand>
</feature>
<feature type="modified residue" description="Cysteine methyl ester; by host" evidence="3">
    <location>
        <position position="186"/>
    </location>
</feature>
<feature type="lipid moiety-binding region" description="S-palmitoyl cysteine; by host" evidence="2">
    <location>
        <position position="181"/>
    </location>
</feature>
<feature type="lipid moiety-binding region" description="S-palmitoyl cysteine; by host" evidence="2">
    <location>
        <position position="184"/>
    </location>
</feature>
<feature type="lipid moiety-binding region" description="S-farnesyl cysteine; by host" evidence="2">
    <location>
        <position position="186"/>
    </location>
</feature>
<accession>P01113</accession>
<organism>
    <name type="scientific">Moloney murine sarcoma virus</name>
    <name type="common">MoMSV</name>
    <dbReference type="NCBI Taxonomy" id="11809"/>
    <lineage>
        <taxon>Viruses</taxon>
        <taxon>Riboviria</taxon>
        <taxon>Pararnavirae</taxon>
        <taxon>Artverviricota</taxon>
        <taxon>Revtraviricetes</taxon>
        <taxon>Ortervirales</taxon>
        <taxon>Retroviridae</taxon>
        <taxon>Orthoretrovirinae</taxon>
        <taxon>Gammaretrovirus</taxon>
    </lineage>
</organism>
<sequence>MTEYKLVVVGAKGVGKSALTIQLIQNHFVDEYDPTIEDSYRKQVVIDGETCLLDILDTAGQEEYSAMRDQYMRTGEGFLCVFAINNTKSFEDIHQYREQIKRVKDSDDVPMVLVGNKCDLAARTVESRQAQDLARSYGIPYIKTSAKTRQGVEDAFYTLVREIRQHKLRKLNPPDESGPGCMSCKCVLS</sequence>
<comment type="catalytic activity">
    <reaction evidence="1">
        <text>GTP + H2O = GDP + phosphate + H(+)</text>
        <dbReference type="Rhea" id="RHEA:19669"/>
        <dbReference type="ChEBI" id="CHEBI:15377"/>
        <dbReference type="ChEBI" id="CHEBI:15378"/>
        <dbReference type="ChEBI" id="CHEBI:37565"/>
        <dbReference type="ChEBI" id="CHEBI:43474"/>
        <dbReference type="ChEBI" id="CHEBI:58189"/>
        <dbReference type="EC" id="3.6.5.2"/>
    </reaction>
</comment>
<comment type="activity regulation">
    <text>Alternates between an inactive form bound to GDP and an active form bound to GTP. Activated by a guanine nucleotide-exchange factor (GEF) and inactivated by a GTPase-activating protein (GAP).</text>
</comment>
<comment type="subcellular location">
    <subcellularLocation>
        <location evidence="3">Host cell membrane</location>
        <topology evidence="3">Lipid-anchor</topology>
        <orientation evidence="3">Cytoplasmic side</orientation>
    </subcellularLocation>
</comment>
<comment type="miscellaneous">
    <text>This p21 transforming protein was generated by a transduction of rodent cellular H-ras-1 gene.</text>
</comment>
<comment type="similarity">
    <text evidence="3">Belongs to the small GTPase superfamily. Ras family.</text>
</comment>
<dbReference type="EC" id="3.6.5.2" evidence="1"/>
<dbReference type="EMBL" id="M10035">
    <property type="protein sequence ID" value="AAA46575.1"/>
    <property type="molecule type" value="Genomic_RNA"/>
</dbReference>
<dbReference type="PIR" id="A01361">
    <property type="entry name" value="TVMVB"/>
</dbReference>
<dbReference type="BMRB" id="P01113"/>
<dbReference type="SMR" id="P01113"/>
<dbReference type="GO" id="GO:0020002">
    <property type="term" value="C:host cell plasma membrane"/>
    <property type="evidence" value="ECO:0007669"/>
    <property type="project" value="UniProtKB-SubCell"/>
</dbReference>
<dbReference type="GO" id="GO:0016020">
    <property type="term" value="C:membrane"/>
    <property type="evidence" value="ECO:0007669"/>
    <property type="project" value="UniProtKB-KW"/>
</dbReference>
<dbReference type="GO" id="GO:0003925">
    <property type="term" value="F:G protein activity"/>
    <property type="evidence" value="ECO:0007669"/>
    <property type="project" value="UniProtKB-EC"/>
</dbReference>
<dbReference type="GO" id="GO:0005525">
    <property type="term" value="F:GTP binding"/>
    <property type="evidence" value="ECO:0007669"/>
    <property type="project" value="UniProtKB-KW"/>
</dbReference>
<dbReference type="GO" id="GO:0007165">
    <property type="term" value="P:signal transduction"/>
    <property type="evidence" value="ECO:0007669"/>
    <property type="project" value="InterPro"/>
</dbReference>
<dbReference type="CDD" id="cd04138">
    <property type="entry name" value="H_N_K_Ras_like"/>
    <property type="match status" value="1"/>
</dbReference>
<dbReference type="FunFam" id="3.40.50.300:FF:000096">
    <property type="entry name" value="KRAS proto-oncogene, GTPase"/>
    <property type="match status" value="1"/>
</dbReference>
<dbReference type="Gene3D" id="3.40.50.300">
    <property type="entry name" value="P-loop containing nucleotide triphosphate hydrolases"/>
    <property type="match status" value="1"/>
</dbReference>
<dbReference type="InterPro" id="IPR027417">
    <property type="entry name" value="P-loop_NTPase"/>
</dbReference>
<dbReference type="InterPro" id="IPR005225">
    <property type="entry name" value="Small_GTP-bd"/>
</dbReference>
<dbReference type="InterPro" id="IPR001806">
    <property type="entry name" value="Small_GTPase"/>
</dbReference>
<dbReference type="InterPro" id="IPR020849">
    <property type="entry name" value="Small_GTPase_Ras-type"/>
</dbReference>
<dbReference type="NCBIfam" id="TIGR00231">
    <property type="entry name" value="small_GTP"/>
    <property type="match status" value="1"/>
</dbReference>
<dbReference type="PANTHER" id="PTHR24070">
    <property type="entry name" value="RAS, DI-RAS, AND RHEB FAMILY MEMBERS OF SMALL GTPASE SUPERFAMILY"/>
    <property type="match status" value="1"/>
</dbReference>
<dbReference type="Pfam" id="PF00071">
    <property type="entry name" value="Ras"/>
    <property type="match status" value="1"/>
</dbReference>
<dbReference type="PRINTS" id="PR00449">
    <property type="entry name" value="RASTRNSFRMNG"/>
</dbReference>
<dbReference type="SMART" id="SM00175">
    <property type="entry name" value="RAB"/>
    <property type="match status" value="1"/>
</dbReference>
<dbReference type="SMART" id="SM00173">
    <property type="entry name" value="RAS"/>
    <property type="match status" value="1"/>
</dbReference>
<dbReference type="SMART" id="SM00174">
    <property type="entry name" value="RHO"/>
    <property type="match status" value="1"/>
</dbReference>
<dbReference type="SUPFAM" id="SSF52540">
    <property type="entry name" value="P-loop containing nucleoside triphosphate hydrolases"/>
    <property type="match status" value="1"/>
</dbReference>
<dbReference type="PROSITE" id="PS51421">
    <property type="entry name" value="RAS"/>
    <property type="match status" value="1"/>
</dbReference>
<organismHost>
    <name type="scientific">Mus musculus</name>
    <name type="common">Mouse</name>
    <dbReference type="NCBI Taxonomy" id="10090"/>
</organismHost>
<keyword id="KW-0342">GTP-binding</keyword>
<keyword id="KW-1032">Host cell membrane</keyword>
<keyword id="KW-1043">Host membrane</keyword>
<keyword id="KW-0378">Hydrolase</keyword>
<keyword id="KW-0449">Lipoprotein</keyword>
<keyword id="KW-0472">Membrane</keyword>
<keyword id="KW-0488">Methylation</keyword>
<keyword id="KW-0547">Nucleotide-binding</keyword>
<keyword id="KW-0553">Oncogene</keyword>
<keyword id="KW-0564">Palmitate</keyword>
<keyword id="KW-0636">Prenylation</keyword>
<reference key="1">
    <citation type="journal article" date="1985" name="J. Virol.">
        <title>Nucleotide sequence analysis of the BALB/c murine sarcoma virus transforming gene.</title>
        <authorList>
            <person name="Reddy E.P."/>
            <person name="Lipman D."/>
            <person name="Andersen P.R."/>
            <person name="Tronick S.R."/>
            <person name="Aaronson S.A."/>
        </authorList>
    </citation>
    <scope>NUCLEOTIDE SEQUENCE [GENOMIC RNA]</scope>
</reference>
<reference key="2">
    <citation type="journal article" date="1987" name="Annu. Rev. Biochem.">
        <title>Ras genes.</title>
        <authorList>
            <person name="Barbacid M."/>
        </authorList>
    </citation>
    <scope>REVIEW</scope>
</reference>